<feature type="chain" id="PRO_0000166124" description="D-amino acid dehydrogenase">
    <location>
        <begin position="1"/>
        <end position="418"/>
    </location>
</feature>
<feature type="binding site" evidence="1">
    <location>
        <begin position="3"/>
        <end position="17"/>
    </location>
    <ligand>
        <name>FAD</name>
        <dbReference type="ChEBI" id="CHEBI:57692"/>
    </ligand>
</feature>
<organism>
    <name type="scientific">Agrobacterium fabrum (strain C58 / ATCC 33970)</name>
    <name type="common">Agrobacterium tumefaciens (strain C58)</name>
    <dbReference type="NCBI Taxonomy" id="176299"/>
    <lineage>
        <taxon>Bacteria</taxon>
        <taxon>Pseudomonadati</taxon>
        <taxon>Pseudomonadota</taxon>
        <taxon>Alphaproteobacteria</taxon>
        <taxon>Hyphomicrobiales</taxon>
        <taxon>Rhizobiaceae</taxon>
        <taxon>Rhizobium/Agrobacterium group</taxon>
        <taxon>Agrobacterium</taxon>
        <taxon>Agrobacterium tumefaciens complex</taxon>
    </lineage>
</organism>
<reference key="1">
    <citation type="journal article" date="2001" name="Science">
        <title>The genome of the natural genetic engineer Agrobacterium tumefaciens C58.</title>
        <authorList>
            <person name="Wood D.W."/>
            <person name="Setubal J.C."/>
            <person name="Kaul R."/>
            <person name="Monks D.E."/>
            <person name="Kitajima J.P."/>
            <person name="Okura V.K."/>
            <person name="Zhou Y."/>
            <person name="Chen L."/>
            <person name="Wood G.E."/>
            <person name="Almeida N.F. Jr."/>
            <person name="Woo L."/>
            <person name="Chen Y."/>
            <person name="Paulsen I.T."/>
            <person name="Eisen J.A."/>
            <person name="Karp P.D."/>
            <person name="Bovee D. Sr."/>
            <person name="Chapman P."/>
            <person name="Clendenning J."/>
            <person name="Deatherage G."/>
            <person name="Gillet W."/>
            <person name="Grant C."/>
            <person name="Kutyavin T."/>
            <person name="Levy R."/>
            <person name="Li M.-J."/>
            <person name="McClelland E."/>
            <person name="Palmieri A."/>
            <person name="Raymond C."/>
            <person name="Rouse G."/>
            <person name="Saenphimmachak C."/>
            <person name="Wu Z."/>
            <person name="Romero P."/>
            <person name="Gordon D."/>
            <person name="Zhang S."/>
            <person name="Yoo H."/>
            <person name="Tao Y."/>
            <person name="Biddle P."/>
            <person name="Jung M."/>
            <person name="Krespan W."/>
            <person name="Perry M."/>
            <person name="Gordon-Kamm B."/>
            <person name="Liao L."/>
            <person name="Kim S."/>
            <person name="Hendrick C."/>
            <person name="Zhao Z.-Y."/>
            <person name="Dolan M."/>
            <person name="Chumley F."/>
            <person name="Tingey S.V."/>
            <person name="Tomb J.-F."/>
            <person name="Gordon M.P."/>
            <person name="Olson M.V."/>
            <person name="Nester E.W."/>
        </authorList>
    </citation>
    <scope>NUCLEOTIDE SEQUENCE [LARGE SCALE GENOMIC DNA]</scope>
    <source>
        <strain>C58 / ATCC 33970</strain>
    </source>
</reference>
<reference key="2">
    <citation type="journal article" date="2001" name="Science">
        <title>Genome sequence of the plant pathogen and biotechnology agent Agrobacterium tumefaciens C58.</title>
        <authorList>
            <person name="Goodner B."/>
            <person name="Hinkle G."/>
            <person name="Gattung S."/>
            <person name="Miller N."/>
            <person name="Blanchard M."/>
            <person name="Qurollo B."/>
            <person name="Goldman B.S."/>
            <person name="Cao Y."/>
            <person name="Askenazi M."/>
            <person name="Halling C."/>
            <person name="Mullin L."/>
            <person name="Houmiel K."/>
            <person name="Gordon J."/>
            <person name="Vaudin M."/>
            <person name="Iartchouk O."/>
            <person name="Epp A."/>
            <person name="Liu F."/>
            <person name="Wollam C."/>
            <person name="Allinger M."/>
            <person name="Doughty D."/>
            <person name="Scott C."/>
            <person name="Lappas C."/>
            <person name="Markelz B."/>
            <person name="Flanagan C."/>
            <person name="Crowell C."/>
            <person name="Gurson J."/>
            <person name="Lomo C."/>
            <person name="Sear C."/>
            <person name="Strub G."/>
            <person name="Cielo C."/>
            <person name="Slater S."/>
        </authorList>
    </citation>
    <scope>NUCLEOTIDE SEQUENCE [LARGE SCALE GENOMIC DNA]</scope>
    <source>
        <strain>C58 / ATCC 33970</strain>
    </source>
</reference>
<proteinExistence type="inferred from homology"/>
<keyword id="KW-0274">FAD</keyword>
<keyword id="KW-0285">Flavoprotein</keyword>
<keyword id="KW-0560">Oxidoreductase</keyword>
<keyword id="KW-1185">Reference proteome</keyword>
<accession>P58739</accession>
<sequence>MNVTILGAGVVGVTSAWYLAKAGHKVTVIDRQPAAALETSFANAGEVSPGYSSPWAAPGIPMKAMKWLFMKHAPLIIRPTADPAAWRWMSQMLRNCTSARYAINKSRMVRVAEYSRDCLMALREETGIDYDQRMQGTLEVFRTQKQFDAIGKDVDVLTAGGVPFEILDRDGCAAIEPGLAPAKEKIVGGLRLPGDETGDCFMFTTELARMAEEAGVTFLYDTGIMRPIVEGGRIKAVETTRGLIEADIFVAALGSYSPQFVRQLGLTLPVYPVKGYSITVPIVKEERAPVSTVMDETFKVAITRLGSRIRAGGMAEIAGFSKDLPAARQETLAHSVEDLFGGAGDQSQAKFWCGLRPMTPDGTPVIGATRYSNLYLNTGHGTLGWTMSCGSARVLADLISGNKPEIDTHDLAISRYAA</sequence>
<evidence type="ECO:0000255" key="1">
    <source>
        <dbReference type="HAMAP-Rule" id="MF_01202"/>
    </source>
</evidence>
<protein>
    <recommendedName>
        <fullName evidence="1">D-amino acid dehydrogenase</fullName>
        <ecNumber evidence="1">1.4.99.-</ecNumber>
    </recommendedName>
</protein>
<dbReference type="EC" id="1.4.99.-" evidence="1"/>
<dbReference type="EMBL" id="AE007870">
    <property type="protein sequence ID" value="AAK90097.1"/>
    <property type="molecule type" value="Genomic_DNA"/>
</dbReference>
<dbReference type="PIR" id="AG2961">
    <property type="entry name" value="AG2961"/>
</dbReference>
<dbReference type="PIR" id="G98321">
    <property type="entry name" value="G98321"/>
</dbReference>
<dbReference type="RefSeq" id="NP_357312.1">
    <property type="nucleotide sequence ID" value="NC_003063.2"/>
</dbReference>
<dbReference type="RefSeq" id="WP_010972918.1">
    <property type="nucleotide sequence ID" value="NC_003063.2"/>
</dbReference>
<dbReference type="SMR" id="P58739"/>
<dbReference type="STRING" id="176299.Atu3293"/>
<dbReference type="EnsemblBacteria" id="AAK90097">
    <property type="protein sequence ID" value="AAK90097"/>
    <property type="gene ID" value="Atu3293"/>
</dbReference>
<dbReference type="GeneID" id="1135167"/>
<dbReference type="KEGG" id="atu:Atu3293"/>
<dbReference type="PATRIC" id="fig|176299.10.peg.3134"/>
<dbReference type="eggNOG" id="COG0665">
    <property type="taxonomic scope" value="Bacteria"/>
</dbReference>
<dbReference type="HOGENOM" id="CLU_007884_9_2_5"/>
<dbReference type="OrthoDB" id="9805337at2"/>
<dbReference type="PhylomeDB" id="P58739"/>
<dbReference type="BioCyc" id="AGRO:ATU3293-MONOMER"/>
<dbReference type="UniPathway" id="UPA00043">
    <property type="reaction ID" value="UER00498"/>
</dbReference>
<dbReference type="Proteomes" id="UP000000813">
    <property type="component" value="Chromosome linear"/>
</dbReference>
<dbReference type="GO" id="GO:0005737">
    <property type="term" value="C:cytoplasm"/>
    <property type="evidence" value="ECO:0007669"/>
    <property type="project" value="TreeGrafter"/>
</dbReference>
<dbReference type="GO" id="GO:0005886">
    <property type="term" value="C:plasma membrane"/>
    <property type="evidence" value="ECO:0007669"/>
    <property type="project" value="TreeGrafter"/>
</dbReference>
<dbReference type="GO" id="GO:0008718">
    <property type="term" value="F:D-amino-acid dehydrogenase activity"/>
    <property type="evidence" value="ECO:0007669"/>
    <property type="project" value="UniProtKB-UniRule"/>
</dbReference>
<dbReference type="GO" id="GO:0055130">
    <property type="term" value="P:D-alanine catabolic process"/>
    <property type="evidence" value="ECO:0007669"/>
    <property type="project" value="UniProtKB-UniPathway"/>
</dbReference>
<dbReference type="FunFam" id="3.50.50.60:FF:000020">
    <property type="entry name" value="D-amino acid dehydrogenase"/>
    <property type="match status" value="1"/>
</dbReference>
<dbReference type="Gene3D" id="3.30.9.10">
    <property type="entry name" value="D-Amino Acid Oxidase, subunit A, domain 2"/>
    <property type="match status" value="1"/>
</dbReference>
<dbReference type="Gene3D" id="3.50.50.60">
    <property type="entry name" value="FAD/NAD(P)-binding domain"/>
    <property type="match status" value="2"/>
</dbReference>
<dbReference type="HAMAP" id="MF_01202">
    <property type="entry name" value="DadA"/>
    <property type="match status" value="1"/>
</dbReference>
<dbReference type="InterPro" id="IPR023080">
    <property type="entry name" value="DadA"/>
</dbReference>
<dbReference type="InterPro" id="IPR006076">
    <property type="entry name" value="FAD-dep_OxRdtase"/>
</dbReference>
<dbReference type="InterPro" id="IPR036188">
    <property type="entry name" value="FAD/NAD-bd_sf"/>
</dbReference>
<dbReference type="NCBIfam" id="NF001933">
    <property type="entry name" value="PRK00711.1"/>
    <property type="match status" value="1"/>
</dbReference>
<dbReference type="PANTHER" id="PTHR13847:SF280">
    <property type="entry name" value="D-AMINO ACID DEHYDROGENASE"/>
    <property type="match status" value="1"/>
</dbReference>
<dbReference type="PANTHER" id="PTHR13847">
    <property type="entry name" value="SARCOSINE DEHYDROGENASE-RELATED"/>
    <property type="match status" value="1"/>
</dbReference>
<dbReference type="Pfam" id="PF01266">
    <property type="entry name" value="DAO"/>
    <property type="match status" value="1"/>
</dbReference>
<dbReference type="SUPFAM" id="SSF54373">
    <property type="entry name" value="FAD-linked reductases, C-terminal domain"/>
    <property type="match status" value="1"/>
</dbReference>
<dbReference type="SUPFAM" id="SSF51905">
    <property type="entry name" value="FAD/NAD(P)-binding domain"/>
    <property type="match status" value="1"/>
</dbReference>
<gene>
    <name evidence="1" type="primary">dadA</name>
    <name type="ordered locus">Atu3293</name>
    <name type="ORF">AGR_L_3050</name>
</gene>
<name>DADA_AGRFC</name>
<comment type="function">
    <text evidence="1">Oxidative deamination of D-amino acids.</text>
</comment>
<comment type="catalytic activity">
    <reaction evidence="1">
        <text>a D-alpha-amino acid + A + H2O = a 2-oxocarboxylate + AH2 + NH4(+)</text>
        <dbReference type="Rhea" id="RHEA:18125"/>
        <dbReference type="ChEBI" id="CHEBI:13193"/>
        <dbReference type="ChEBI" id="CHEBI:15377"/>
        <dbReference type="ChEBI" id="CHEBI:17499"/>
        <dbReference type="ChEBI" id="CHEBI:28938"/>
        <dbReference type="ChEBI" id="CHEBI:35179"/>
        <dbReference type="ChEBI" id="CHEBI:59871"/>
    </reaction>
</comment>
<comment type="cofactor">
    <cofactor evidence="1">
        <name>FAD</name>
        <dbReference type="ChEBI" id="CHEBI:57692"/>
    </cofactor>
</comment>
<comment type="pathway">
    <text>Amino-acid degradation; D-alanine degradation; NH(3) and pyruvate from D-alanine: step 1/1.</text>
</comment>
<comment type="similarity">
    <text evidence="1">Belongs to the DadA oxidoreductase family.</text>
</comment>